<evidence type="ECO:0000250" key="1"/>
<evidence type="ECO:0000305" key="2"/>
<feature type="chain" id="PRO_0000328680" description="AP-3 complex subunit sigma">
    <location>
        <begin position="1"/>
        <end position="171"/>
    </location>
</feature>
<gene>
    <name type="primary">ap3s1</name>
    <name type="ORF">DDB_G0275405</name>
</gene>
<keyword id="KW-0967">Endosome</keyword>
<keyword id="KW-0472">Membrane</keyword>
<keyword id="KW-0653">Protein transport</keyword>
<keyword id="KW-1185">Reference proteome</keyword>
<keyword id="KW-0813">Transport</keyword>
<sequence>MIKSILIINNHGKPRLIKFYEHYSEEKQQQIIRELFLLVSKRTERSCNFLEIGNNSNIFDKDTKIIYRHYATLFFIFCVDSSESELSIIDLIQTFVESLDKCFENVCELDLIFHIDKVHYILDEMVMGGLVLETNPTIIFSNYEIQNKLEKAENPLLSGLAGVMQTIKPNK</sequence>
<comment type="function">
    <text>Part of the AP-3 complex, an adaptor-related complex which is essential for the compartmentalization of the endocytic pathway.</text>
</comment>
<comment type="subunit">
    <text evidence="1">Adaptor protein complex 3 (AP-3) is a heterotetramer composed of two large adaptins (delta-type subunit and beta-type subunit), a medium adaptin (mu-type subunit) and a small adaptin (sigma-type subunit).</text>
</comment>
<comment type="subcellular location">
    <subcellularLocation>
        <location evidence="1">Endosome membrane</location>
    </subcellularLocation>
</comment>
<comment type="similarity">
    <text evidence="2">Belongs to the adaptor complexes small subunit family.</text>
</comment>
<organism>
    <name type="scientific">Dictyostelium discoideum</name>
    <name type="common">Social amoeba</name>
    <dbReference type="NCBI Taxonomy" id="44689"/>
    <lineage>
        <taxon>Eukaryota</taxon>
        <taxon>Amoebozoa</taxon>
        <taxon>Evosea</taxon>
        <taxon>Eumycetozoa</taxon>
        <taxon>Dictyostelia</taxon>
        <taxon>Dictyosteliales</taxon>
        <taxon>Dictyosteliaceae</taxon>
        <taxon>Dictyostelium</taxon>
    </lineage>
</organism>
<name>AP3S_DICDI</name>
<accession>Q553S2</accession>
<reference key="1">
    <citation type="journal article" date="2002" name="Nature">
        <title>Sequence and analysis of chromosome 2 of Dictyostelium discoideum.</title>
        <authorList>
            <person name="Gloeckner G."/>
            <person name="Eichinger L."/>
            <person name="Szafranski K."/>
            <person name="Pachebat J.A."/>
            <person name="Bankier A.T."/>
            <person name="Dear P.H."/>
            <person name="Lehmann R."/>
            <person name="Baumgart C."/>
            <person name="Parra G."/>
            <person name="Abril J.F."/>
            <person name="Guigo R."/>
            <person name="Kumpf K."/>
            <person name="Tunggal B."/>
            <person name="Cox E.C."/>
            <person name="Quail M.A."/>
            <person name="Platzer M."/>
            <person name="Rosenthal A."/>
            <person name="Noegel A.A."/>
        </authorList>
    </citation>
    <scope>NUCLEOTIDE SEQUENCE [LARGE SCALE GENOMIC DNA]</scope>
    <source>
        <strain>AX4</strain>
    </source>
</reference>
<reference key="2">
    <citation type="journal article" date="2005" name="Nature">
        <title>The genome of the social amoeba Dictyostelium discoideum.</title>
        <authorList>
            <person name="Eichinger L."/>
            <person name="Pachebat J.A."/>
            <person name="Gloeckner G."/>
            <person name="Rajandream M.A."/>
            <person name="Sucgang R."/>
            <person name="Berriman M."/>
            <person name="Song J."/>
            <person name="Olsen R."/>
            <person name="Szafranski K."/>
            <person name="Xu Q."/>
            <person name="Tunggal B."/>
            <person name="Kummerfeld S."/>
            <person name="Madera M."/>
            <person name="Konfortov B.A."/>
            <person name="Rivero F."/>
            <person name="Bankier A.T."/>
            <person name="Lehmann R."/>
            <person name="Hamlin N."/>
            <person name="Davies R."/>
            <person name="Gaudet P."/>
            <person name="Fey P."/>
            <person name="Pilcher K."/>
            <person name="Chen G."/>
            <person name="Saunders D."/>
            <person name="Sodergren E.J."/>
            <person name="Davis P."/>
            <person name="Kerhornou A."/>
            <person name="Nie X."/>
            <person name="Hall N."/>
            <person name="Anjard C."/>
            <person name="Hemphill L."/>
            <person name="Bason N."/>
            <person name="Farbrother P."/>
            <person name="Desany B."/>
            <person name="Just E."/>
            <person name="Morio T."/>
            <person name="Rost R."/>
            <person name="Churcher C.M."/>
            <person name="Cooper J."/>
            <person name="Haydock S."/>
            <person name="van Driessche N."/>
            <person name="Cronin A."/>
            <person name="Goodhead I."/>
            <person name="Muzny D.M."/>
            <person name="Mourier T."/>
            <person name="Pain A."/>
            <person name="Lu M."/>
            <person name="Harper D."/>
            <person name="Lindsay R."/>
            <person name="Hauser H."/>
            <person name="James K.D."/>
            <person name="Quiles M."/>
            <person name="Madan Babu M."/>
            <person name="Saito T."/>
            <person name="Buchrieser C."/>
            <person name="Wardroper A."/>
            <person name="Felder M."/>
            <person name="Thangavelu M."/>
            <person name="Johnson D."/>
            <person name="Knights A."/>
            <person name="Loulseged H."/>
            <person name="Mungall K.L."/>
            <person name="Oliver K."/>
            <person name="Price C."/>
            <person name="Quail M.A."/>
            <person name="Urushihara H."/>
            <person name="Hernandez J."/>
            <person name="Rabbinowitsch E."/>
            <person name="Steffen D."/>
            <person name="Sanders M."/>
            <person name="Ma J."/>
            <person name="Kohara Y."/>
            <person name="Sharp S."/>
            <person name="Simmonds M.N."/>
            <person name="Spiegler S."/>
            <person name="Tivey A."/>
            <person name="Sugano S."/>
            <person name="White B."/>
            <person name="Walker D."/>
            <person name="Woodward J.R."/>
            <person name="Winckler T."/>
            <person name="Tanaka Y."/>
            <person name="Shaulsky G."/>
            <person name="Schleicher M."/>
            <person name="Weinstock G.M."/>
            <person name="Rosenthal A."/>
            <person name="Cox E.C."/>
            <person name="Chisholm R.L."/>
            <person name="Gibbs R.A."/>
            <person name="Loomis W.F."/>
            <person name="Platzer M."/>
            <person name="Kay R.R."/>
            <person name="Williams J.G."/>
            <person name="Dear P.H."/>
            <person name="Noegel A.A."/>
            <person name="Barrell B.G."/>
            <person name="Kuspa A."/>
        </authorList>
    </citation>
    <scope>NUCLEOTIDE SEQUENCE [LARGE SCALE GENOMIC DNA]</scope>
    <source>
        <strain>AX4</strain>
    </source>
</reference>
<dbReference type="EMBL" id="AAFI02000013">
    <property type="protein sequence ID" value="EAL69768.1"/>
    <property type="molecule type" value="Genomic_DNA"/>
</dbReference>
<dbReference type="RefSeq" id="XP_643675.1">
    <property type="nucleotide sequence ID" value="XM_638583.1"/>
</dbReference>
<dbReference type="SMR" id="Q553S2"/>
<dbReference type="FunCoup" id="Q553S2">
    <property type="interactions" value="844"/>
</dbReference>
<dbReference type="STRING" id="44689.Q553S2"/>
<dbReference type="PaxDb" id="44689-DDB0234244"/>
<dbReference type="EnsemblProtists" id="EAL69768">
    <property type="protein sequence ID" value="EAL69768"/>
    <property type="gene ID" value="DDB_G0275405"/>
</dbReference>
<dbReference type="GeneID" id="8619941"/>
<dbReference type="KEGG" id="ddi:DDB_G0275405"/>
<dbReference type="dictyBase" id="DDB_G0275405">
    <property type="gene designation" value="ap3s1"/>
</dbReference>
<dbReference type="VEuPathDB" id="AmoebaDB:DDB_G0275405"/>
<dbReference type="eggNOG" id="KOG0936">
    <property type="taxonomic scope" value="Eukaryota"/>
</dbReference>
<dbReference type="HOGENOM" id="CLU_061221_2_2_1"/>
<dbReference type="InParanoid" id="Q553S2"/>
<dbReference type="OMA" id="DLIFNWQ"/>
<dbReference type="PhylomeDB" id="Q553S2"/>
<dbReference type="PRO" id="PR:Q553S2"/>
<dbReference type="Proteomes" id="UP000002195">
    <property type="component" value="Chromosome 2"/>
</dbReference>
<dbReference type="GO" id="GO:0030123">
    <property type="term" value="C:AP-3 adaptor complex"/>
    <property type="evidence" value="ECO:0007669"/>
    <property type="project" value="InterPro"/>
</dbReference>
<dbReference type="GO" id="GO:0010008">
    <property type="term" value="C:endosome membrane"/>
    <property type="evidence" value="ECO:0007669"/>
    <property type="project" value="UniProtKB-SubCell"/>
</dbReference>
<dbReference type="GO" id="GO:0043231">
    <property type="term" value="C:intracellular membrane-bounded organelle"/>
    <property type="evidence" value="ECO:0000318"/>
    <property type="project" value="GO_Central"/>
</dbReference>
<dbReference type="GO" id="GO:0006896">
    <property type="term" value="P:Golgi to vacuole transport"/>
    <property type="evidence" value="ECO:0007669"/>
    <property type="project" value="InterPro"/>
</dbReference>
<dbReference type="GO" id="GO:0015031">
    <property type="term" value="P:protein transport"/>
    <property type="evidence" value="ECO:0007669"/>
    <property type="project" value="UniProtKB-KW"/>
</dbReference>
<dbReference type="GO" id="GO:0016192">
    <property type="term" value="P:vesicle-mediated transport"/>
    <property type="evidence" value="ECO:0000318"/>
    <property type="project" value="GO_Central"/>
</dbReference>
<dbReference type="CDD" id="cd14834">
    <property type="entry name" value="AP3_sigma"/>
    <property type="match status" value="1"/>
</dbReference>
<dbReference type="FunFam" id="3.30.450.60:FF:000001">
    <property type="entry name" value="AP complex subunit sigma"/>
    <property type="match status" value="1"/>
</dbReference>
<dbReference type="Gene3D" id="3.30.450.60">
    <property type="match status" value="1"/>
</dbReference>
<dbReference type="InterPro" id="IPR016635">
    <property type="entry name" value="AP_complex_ssu"/>
</dbReference>
<dbReference type="InterPro" id="IPR022775">
    <property type="entry name" value="AP_mu_sigma_su"/>
</dbReference>
<dbReference type="InterPro" id="IPR027155">
    <property type="entry name" value="APS3"/>
</dbReference>
<dbReference type="InterPro" id="IPR011012">
    <property type="entry name" value="Longin-like_dom_sf"/>
</dbReference>
<dbReference type="PANTHER" id="PTHR11753">
    <property type="entry name" value="ADAPTOR COMPLEXES SMALL SUBUNIT FAMILY"/>
    <property type="match status" value="1"/>
</dbReference>
<dbReference type="Pfam" id="PF01217">
    <property type="entry name" value="Clat_adaptor_s"/>
    <property type="match status" value="1"/>
</dbReference>
<dbReference type="PIRSF" id="PIRSF015588">
    <property type="entry name" value="AP_complex_sigma"/>
    <property type="match status" value="1"/>
</dbReference>
<dbReference type="SUPFAM" id="SSF64356">
    <property type="entry name" value="SNARE-like"/>
    <property type="match status" value="1"/>
</dbReference>
<proteinExistence type="inferred from homology"/>
<protein>
    <recommendedName>
        <fullName>AP-3 complex subunit sigma</fullName>
    </recommendedName>
    <alternativeName>
        <fullName>AP-3 complex subunit sigma-3</fullName>
    </alternativeName>
    <alternativeName>
        <fullName>Adaptor-related protein complex 3 subunit sigma</fullName>
    </alternativeName>
    <alternativeName>
        <fullName>Sigma-adaptin 3</fullName>
    </alternativeName>
    <alternativeName>
        <fullName>Sigma3-adaptin</fullName>
    </alternativeName>
</protein>